<reference key="1">
    <citation type="journal article" date="1992" name="Mol. Cell. Biol.">
        <title>Molecular characterization of the lam locus and sequences involved in regulation by the AmdR protein of Aspergillus nidulans.</title>
        <authorList>
            <person name="Richardson I.B."/>
            <person name="Katz M.E."/>
            <person name="Hynes M.J."/>
        </authorList>
    </citation>
    <scope>NUCLEOTIDE SEQUENCE [GENOMIC DNA]</scope>
    <source>
        <strain>biA1 niiA4</strain>
    </source>
</reference>
<reference key="2">
    <citation type="journal article" date="2005" name="Nature">
        <title>Sequencing of Aspergillus nidulans and comparative analysis with A. fumigatus and A. oryzae.</title>
        <authorList>
            <person name="Galagan J.E."/>
            <person name="Calvo S.E."/>
            <person name="Cuomo C."/>
            <person name="Ma L.-J."/>
            <person name="Wortman J.R."/>
            <person name="Batzoglou S."/>
            <person name="Lee S.-I."/>
            <person name="Bastuerkmen M."/>
            <person name="Spevak C.C."/>
            <person name="Clutterbuck J."/>
            <person name="Kapitonov V."/>
            <person name="Jurka J."/>
            <person name="Scazzocchio C."/>
            <person name="Farman M.L."/>
            <person name="Butler J."/>
            <person name="Purcell S."/>
            <person name="Harris S."/>
            <person name="Braus G.H."/>
            <person name="Draht O."/>
            <person name="Busch S."/>
            <person name="D'Enfert C."/>
            <person name="Bouchier C."/>
            <person name="Goldman G.H."/>
            <person name="Bell-Pedersen D."/>
            <person name="Griffiths-Jones S."/>
            <person name="Doonan J.H."/>
            <person name="Yu J."/>
            <person name="Vienken K."/>
            <person name="Pain A."/>
            <person name="Freitag M."/>
            <person name="Selker E.U."/>
            <person name="Archer D.B."/>
            <person name="Penalva M.A."/>
            <person name="Oakley B.R."/>
            <person name="Momany M."/>
            <person name="Tanaka T."/>
            <person name="Kumagai T."/>
            <person name="Asai K."/>
            <person name="Machida M."/>
            <person name="Nierman W.C."/>
            <person name="Denning D.W."/>
            <person name="Caddick M.X."/>
            <person name="Hynes M."/>
            <person name="Paoletti M."/>
            <person name="Fischer R."/>
            <person name="Miller B.L."/>
            <person name="Dyer P.S."/>
            <person name="Sachs M.S."/>
            <person name="Osmani S.A."/>
            <person name="Birren B.W."/>
        </authorList>
    </citation>
    <scope>NUCLEOTIDE SEQUENCE [LARGE SCALE GENOMIC DNA]</scope>
    <source>
        <strain>FGSC A4 / ATCC 38163 / CBS 112.46 / NRRL 194 / M139</strain>
    </source>
</reference>
<reference key="3">
    <citation type="journal article" date="2009" name="Fungal Genet. Biol.">
        <title>The 2008 update of the Aspergillus nidulans genome annotation: a community effort.</title>
        <authorList>
            <person name="Wortman J.R."/>
            <person name="Gilsenan J.M."/>
            <person name="Joardar V."/>
            <person name="Deegan J."/>
            <person name="Clutterbuck J."/>
            <person name="Andersen M.R."/>
            <person name="Archer D."/>
            <person name="Bencina M."/>
            <person name="Braus G."/>
            <person name="Coutinho P."/>
            <person name="von Dohren H."/>
            <person name="Doonan J."/>
            <person name="Driessen A.J."/>
            <person name="Durek P."/>
            <person name="Espeso E."/>
            <person name="Fekete E."/>
            <person name="Flipphi M."/>
            <person name="Estrada C.G."/>
            <person name="Geysens S."/>
            <person name="Goldman G."/>
            <person name="de Groot P.W."/>
            <person name="Hansen K."/>
            <person name="Harris S.D."/>
            <person name="Heinekamp T."/>
            <person name="Helmstaedt K."/>
            <person name="Henrissat B."/>
            <person name="Hofmann G."/>
            <person name="Homan T."/>
            <person name="Horio T."/>
            <person name="Horiuchi H."/>
            <person name="James S."/>
            <person name="Jones M."/>
            <person name="Karaffa L."/>
            <person name="Karanyi Z."/>
            <person name="Kato M."/>
            <person name="Keller N."/>
            <person name="Kelly D.E."/>
            <person name="Kiel J.A."/>
            <person name="Kim J.M."/>
            <person name="van der Klei I.J."/>
            <person name="Klis F.M."/>
            <person name="Kovalchuk A."/>
            <person name="Krasevec N."/>
            <person name="Kubicek C.P."/>
            <person name="Liu B."/>
            <person name="Maccabe A."/>
            <person name="Meyer V."/>
            <person name="Mirabito P."/>
            <person name="Miskei M."/>
            <person name="Mos M."/>
            <person name="Mullins J."/>
            <person name="Nelson D.R."/>
            <person name="Nielsen J."/>
            <person name="Oakley B.R."/>
            <person name="Osmani S.A."/>
            <person name="Pakula T."/>
            <person name="Paszewski A."/>
            <person name="Paulsen I."/>
            <person name="Pilsyk S."/>
            <person name="Pocsi I."/>
            <person name="Punt P.J."/>
            <person name="Ram A.F."/>
            <person name="Ren Q."/>
            <person name="Robellet X."/>
            <person name="Robson G."/>
            <person name="Seiboth B."/>
            <person name="van Solingen P."/>
            <person name="Specht T."/>
            <person name="Sun J."/>
            <person name="Taheri-Talesh N."/>
            <person name="Takeshita N."/>
            <person name="Ussery D."/>
            <person name="vanKuyk P.A."/>
            <person name="Visser H."/>
            <person name="van de Vondervoort P.J."/>
            <person name="de Vries R.P."/>
            <person name="Walton J."/>
            <person name="Xiang X."/>
            <person name="Xiong Y."/>
            <person name="Zeng A.P."/>
            <person name="Brandt B.W."/>
            <person name="Cornell M.J."/>
            <person name="van den Hondel C.A."/>
            <person name="Visser J."/>
            <person name="Oliver S.G."/>
            <person name="Turner G."/>
        </authorList>
    </citation>
    <scope>GENOME REANNOTATION</scope>
    <source>
        <strain>FGSC A4 / ATCC 38163 / CBS 112.46 / NRRL 194 / M139</strain>
    </source>
</reference>
<reference key="4">
    <citation type="journal article" date="1978" name="Mol. Gen. Genet.">
        <title>Lactam utilisation in Aspergillus nidulans: evidence for a fourth gene under the control of the integrator gene intA.</title>
        <authorList>
            <person name="Arst H.N. Jr."/>
            <person name="Penfold H.A."/>
            <person name="Bailey C.R."/>
        </authorList>
    </citation>
    <scope>FUNCTION</scope>
</reference>
<reference key="5">
    <citation type="journal article" date="1989" name="Gene">
        <title>Gene function identified by interspecific transformation.</title>
        <authorList>
            <person name="Katz M.E."/>
            <person name="Hynes M.J."/>
        </authorList>
    </citation>
    <scope>FUNCTION</scope>
</reference>
<reference key="6">
    <citation type="journal article" date="1989" name="Genetics">
        <title>Characterization of the amdR-controlled lamA and lamB genes of Aspergillus nidulans.</title>
        <authorList>
            <person name="Katz M.E."/>
            <person name="Hynes M.J."/>
        </authorList>
    </citation>
    <scope>FUNCTION</scope>
    <scope>INDUCTION</scope>
</reference>
<gene>
    <name type="primary">lamB</name>
    <name type="ORF">AN0886</name>
</gene>
<comment type="function">
    <text evidence="1 2 3">Involved in the utilization of lactams. Required for the conversion of exogenous 2-pyrrolidinone (gamma-butyrolactam) to endogenous gamma-amino-n-butyrate (GABA).</text>
</comment>
<comment type="induction">
    <text evidence="1">By beta-alanine.</text>
</comment>
<comment type="similarity">
    <text evidence="4">Belongs to the LamB/PxpA family.</text>
</comment>
<comment type="sequence caution" evidence="4">
    <conflict type="frameshift">
        <sequence resource="EMBL-CDS" id="AAA33313"/>
    </conflict>
</comment>
<accession>P38096</accession>
<accession>C8VPY3</accession>
<accession>Q5BEZ4</accession>
<name>LAMB_EMENI</name>
<keyword id="KW-1185">Reference proteome</keyword>
<proteinExistence type="evidence at transcript level"/>
<evidence type="ECO:0000269" key="1">
    <source>
    </source>
</evidence>
<evidence type="ECO:0000269" key="2">
    <source>
    </source>
</evidence>
<evidence type="ECO:0000269" key="3">
    <source>
    </source>
</evidence>
<evidence type="ECO:0000305" key="4"/>
<dbReference type="EMBL" id="M77283">
    <property type="protein sequence ID" value="AAA33313.1"/>
    <property type="status" value="ALT_FRAME"/>
    <property type="molecule type" value="Genomic_DNA"/>
</dbReference>
<dbReference type="EMBL" id="AACD01000014">
    <property type="protein sequence ID" value="EAA65915.1"/>
    <property type="molecule type" value="Genomic_DNA"/>
</dbReference>
<dbReference type="EMBL" id="BN001308">
    <property type="protein sequence ID" value="CBF88590.1"/>
    <property type="molecule type" value="Genomic_DNA"/>
</dbReference>
<dbReference type="PIR" id="B42064">
    <property type="entry name" value="B42064"/>
</dbReference>
<dbReference type="RefSeq" id="XP_658490.1">
    <property type="nucleotide sequence ID" value="XM_653398.1"/>
</dbReference>
<dbReference type="SMR" id="P38096"/>
<dbReference type="STRING" id="227321.P38096"/>
<dbReference type="EnsemblFungi" id="CBF88590">
    <property type="protein sequence ID" value="CBF88590"/>
    <property type="gene ID" value="ANIA_00886"/>
</dbReference>
<dbReference type="KEGG" id="ani:ANIA_00886"/>
<dbReference type="VEuPathDB" id="FungiDB:AN0886"/>
<dbReference type="eggNOG" id="ENOG502S0UZ">
    <property type="taxonomic scope" value="Eukaryota"/>
</dbReference>
<dbReference type="HOGENOM" id="CLU_069535_1_0_1"/>
<dbReference type="InParanoid" id="P38096"/>
<dbReference type="OMA" id="PHGRLGN"/>
<dbReference type="OrthoDB" id="5295431at2759"/>
<dbReference type="Proteomes" id="UP000000560">
    <property type="component" value="Chromosome VIII"/>
</dbReference>
<dbReference type="GO" id="GO:0005975">
    <property type="term" value="P:carbohydrate metabolic process"/>
    <property type="evidence" value="ECO:0007669"/>
    <property type="project" value="InterPro"/>
</dbReference>
<dbReference type="GO" id="GO:0009448">
    <property type="term" value="P:gamma-aminobutyric acid metabolic process"/>
    <property type="evidence" value="ECO:0000315"/>
    <property type="project" value="UniProtKB"/>
</dbReference>
<dbReference type="CDD" id="cd11665">
    <property type="entry name" value="LamB_like"/>
    <property type="match status" value="1"/>
</dbReference>
<dbReference type="FunFam" id="3.20.20.370:FF:000017">
    <property type="entry name" value="Lactam utilization protein lamB"/>
    <property type="match status" value="1"/>
</dbReference>
<dbReference type="Gene3D" id="3.20.20.370">
    <property type="entry name" value="Glycoside hydrolase/deacetylase"/>
    <property type="match status" value="1"/>
</dbReference>
<dbReference type="InterPro" id="IPR011330">
    <property type="entry name" value="Glyco_hydro/deAcase_b/a-brl"/>
</dbReference>
<dbReference type="InterPro" id="IPR005501">
    <property type="entry name" value="LamB/YcsF/PxpA-like"/>
</dbReference>
<dbReference type="NCBIfam" id="NF003814">
    <property type="entry name" value="PRK05406.1-3"/>
    <property type="match status" value="1"/>
</dbReference>
<dbReference type="PANTHER" id="PTHR30292:SF0">
    <property type="entry name" value="5-OXOPROLINASE SUBUNIT A"/>
    <property type="match status" value="1"/>
</dbReference>
<dbReference type="PANTHER" id="PTHR30292">
    <property type="entry name" value="UNCHARACTERIZED PROTEIN YBGL-RELATED"/>
    <property type="match status" value="1"/>
</dbReference>
<dbReference type="Pfam" id="PF03746">
    <property type="entry name" value="LamB_YcsF"/>
    <property type="match status" value="1"/>
</dbReference>
<dbReference type="SUPFAM" id="SSF88713">
    <property type="entry name" value="Glycoside hydrolase/deacetylase"/>
    <property type="match status" value="1"/>
</dbReference>
<feature type="chain" id="PRO_0000185068" description="Lactam utilization protein lamB">
    <location>
        <begin position="1"/>
        <end position="253"/>
    </location>
</feature>
<protein>
    <recommendedName>
        <fullName>Lactam utilization protein lamB</fullName>
    </recommendedName>
</protein>
<organism>
    <name type="scientific">Emericella nidulans (strain FGSC A4 / ATCC 38163 / CBS 112.46 / NRRL 194 / M139)</name>
    <name type="common">Aspergillus nidulans</name>
    <dbReference type="NCBI Taxonomy" id="227321"/>
    <lineage>
        <taxon>Eukaryota</taxon>
        <taxon>Fungi</taxon>
        <taxon>Dikarya</taxon>
        <taxon>Ascomycota</taxon>
        <taxon>Pezizomycotina</taxon>
        <taxon>Eurotiomycetes</taxon>
        <taxon>Eurotiomycetidae</taxon>
        <taxon>Eurotiales</taxon>
        <taxon>Aspergillaceae</taxon>
        <taxon>Aspergillus</taxon>
        <taxon>Aspergillus subgen. Nidulantes</taxon>
    </lineage>
</organism>
<sequence>MAPIKKKALINCDMGEAYGNWTCGPDLELLPLIDIANIACGFHAGDPLIMMETVRNCKAHNILVGAHPGLPDIQGFGRREMKLSPEELTAITIYQVGALQGFLDREGVRLNHVKPHGVLYGMMCRDYEVAKAVMLGIPKGIPVFGLPGTNMEKAANDLGIEFRAEFYGDVKYDSNGMLVIDRKKKPWDPADVEKHVRQQLEDQSVTSVDGVVVPLPIKDYDVSICCHSDSPGCLEIIKTTKKVVDEFNKKYGF</sequence>